<feature type="chain" id="PRO_0000337195" description="Repressor of RNA polymerase III transcription MAF1 homolog">
    <location>
        <begin position="1"/>
        <end position="260"/>
    </location>
</feature>
<feature type="region of interest" description="Disordered" evidence="4">
    <location>
        <begin position="58"/>
        <end position="85"/>
    </location>
</feature>
<feature type="region of interest" description="Disordered" evidence="4">
    <location>
        <begin position="227"/>
        <end position="255"/>
    </location>
</feature>
<feature type="compositionally biased region" description="Polar residues" evidence="4">
    <location>
        <begin position="61"/>
        <end position="76"/>
    </location>
</feature>
<feature type="compositionally biased region" description="Basic and acidic residues" evidence="4">
    <location>
        <begin position="242"/>
        <end position="255"/>
    </location>
</feature>
<feature type="modified residue" description="Phosphoserine; by MTOR" evidence="3">
    <location>
        <position position="60"/>
    </location>
</feature>
<feature type="modified residue" description="Phosphothreonine" evidence="3">
    <location>
        <position position="64"/>
    </location>
</feature>
<feature type="modified residue" description="Phosphoserine" evidence="3">
    <location>
        <position position="65"/>
    </location>
</feature>
<feature type="modified residue" description="Phosphoserine; by MTOR" evidence="3">
    <location>
        <position position="68"/>
    </location>
</feature>
<feature type="modified residue" description="Phosphoserine" evidence="3">
    <location>
        <position position="70"/>
    </location>
</feature>
<feature type="modified residue" description="Phosphoserine; by MTOR" evidence="3">
    <location>
        <position position="75"/>
    </location>
</feature>
<feature type="modified residue" description="Phosphothreonine" evidence="3">
    <location>
        <position position="212"/>
    </location>
</feature>
<feature type="modified residue" description="Phosphoserine" evidence="3">
    <location>
        <position position="214"/>
    </location>
</feature>
<feature type="cross-link" description="Glycyl lysine isopeptide (Lys-Gly) (interchain with G-Cter in SUMO1 and SUMO2)" evidence="1">
    <location>
        <position position="35"/>
    </location>
</feature>
<protein>
    <recommendedName>
        <fullName>Repressor of RNA polymerase III transcription MAF1 homolog</fullName>
    </recommendedName>
</protein>
<sequence length="260" mass="28922">MKLLENSSFEAINSQLTVETGDAHIIGRIESYSCKMAGDDKHMFKQFCQEGQPHVLEALSPPQTSGLSPSRLSKSQGGEDESPLSDKCSRKTLFYLIATLNESFRPDYDFSTARSHEFSREPSLRWVVNAVNCSLFSAVREDFKALKPQLWNAVDEEICLAECDIYSYNPDLDSDPFGEDGSLWSFNYFFYNKRLKRIVFFSCRSISGSTYTPSEAGNALDLELGAEEVDEESGGGGGGGEGRAEETSTMEEDRVPVICM</sequence>
<organism>
    <name type="scientific">Rattus norvegicus</name>
    <name type="common">Rat</name>
    <dbReference type="NCBI Taxonomy" id="10116"/>
    <lineage>
        <taxon>Eukaryota</taxon>
        <taxon>Metazoa</taxon>
        <taxon>Chordata</taxon>
        <taxon>Craniata</taxon>
        <taxon>Vertebrata</taxon>
        <taxon>Euteleostomi</taxon>
        <taxon>Mammalia</taxon>
        <taxon>Eutheria</taxon>
        <taxon>Euarchontoglires</taxon>
        <taxon>Glires</taxon>
        <taxon>Rodentia</taxon>
        <taxon>Myomorpha</taxon>
        <taxon>Muroidea</taxon>
        <taxon>Muridae</taxon>
        <taxon>Murinae</taxon>
        <taxon>Rattus</taxon>
    </lineage>
</organism>
<proteinExistence type="evidence at transcript level"/>
<reference key="1">
    <citation type="journal article" date="2004" name="Genome Res.">
        <title>The status, quality, and expansion of the NIH full-length cDNA project: the Mammalian Gene Collection (MGC).</title>
        <authorList>
            <consortium name="The MGC Project Team"/>
        </authorList>
    </citation>
    <scope>NUCLEOTIDE SEQUENCE [LARGE SCALE MRNA]</scope>
    <source>
        <tissue>Heart</tissue>
    </source>
</reference>
<keyword id="KW-0963">Cytoplasm</keyword>
<keyword id="KW-1017">Isopeptide bond</keyword>
<keyword id="KW-0539">Nucleus</keyword>
<keyword id="KW-0597">Phosphoprotein</keyword>
<keyword id="KW-1185">Reference proteome</keyword>
<keyword id="KW-0678">Repressor</keyword>
<keyword id="KW-0804">Transcription</keyword>
<keyword id="KW-0805">Transcription regulation</keyword>
<keyword id="KW-0832">Ubl conjugation</keyword>
<evidence type="ECO:0000250" key="1"/>
<evidence type="ECO:0000250" key="2">
    <source>
        <dbReference type="UniProtKB" id="Q9D0U6"/>
    </source>
</evidence>
<evidence type="ECO:0000250" key="3">
    <source>
        <dbReference type="UniProtKB" id="Q9H063"/>
    </source>
</evidence>
<evidence type="ECO:0000256" key="4">
    <source>
        <dbReference type="SAM" id="MobiDB-lite"/>
    </source>
</evidence>
<evidence type="ECO:0000305" key="5"/>
<name>MAF1_RAT</name>
<dbReference type="EMBL" id="BC083712">
    <property type="protein sequence ID" value="AAH83712.1"/>
    <property type="molecule type" value="mRNA"/>
</dbReference>
<dbReference type="RefSeq" id="NP_001014107.1">
    <property type="nucleotide sequence ID" value="NM_001014085.1"/>
</dbReference>
<dbReference type="SMR" id="Q5XIH0"/>
<dbReference type="FunCoup" id="Q5XIH0">
    <property type="interactions" value="3811"/>
</dbReference>
<dbReference type="STRING" id="10116.ENSRNOP00000018240"/>
<dbReference type="iPTMnet" id="Q5XIH0"/>
<dbReference type="PhosphoSitePlus" id="Q5XIH0"/>
<dbReference type="PaxDb" id="10116-ENSRNOP00000018240"/>
<dbReference type="GeneID" id="315093"/>
<dbReference type="KEGG" id="rno:315093"/>
<dbReference type="UCSC" id="RGD:1359315">
    <property type="organism name" value="rat"/>
</dbReference>
<dbReference type="AGR" id="RGD:1359315"/>
<dbReference type="CTD" id="84232"/>
<dbReference type="RGD" id="1359315">
    <property type="gene designation" value="Maf1"/>
</dbReference>
<dbReference type="VEuPathDB" id="HostDB:ENSRNOG00000013514"/>
<dbReference type="eggNOG" id="KOG3104">
    <property type="taxonomic scope" value="Eukaryota"/>
</dbReference>
<dbReference type="HOGENOM" id="CLU_037043_3_1_1"/>
<dbReference type="InParanoid" id="Q5XIH0"/>
<dbReference type="OrthoDB" id="38164at9989"/>
<dbReference type="PhylomeDB" id="Q5XIH0"/>
<dbReference type="TreeFam" id="TF315149"/>
<dbReference type="Reactome" id="R-RNO-8943724">
    <property type="pathway name" value="Regulation of PTEN gene transcription"/>
</dbReference>
<dbReference type="PRO" id="PR:Q5XIH0"/>
<dbReference type="Proteomes" id="UP000002494">
    <property type="component" value="Chromosome 7"/>
</dbReference>
<dbReference type="Bgee" id="ENSRNOG00000013514">
    <property type="expression patterns" value="Expressed in skeletal muscle tissue and 19 other cell types or tissues"/>
</dbReference>
<dbReference type="GO" id="GO:0030424">
    <property type="term" value="C:axon"/>
    <property type="evidence" value="ECO:0000314"/>
    <property type="project" value="MGI"/>
</dbReference>
<dbReference type="GO" id="GO:0005737">
    <property type="term" value="C:cytoplasm"/>
    <property type="evidence" value="ECO:0000250"/>
    <property type="project" value="UniProtKB"/>
</dbReference>
<dbReference type="GO" id="GO:0005829">
    <property type="term" value="C:cytosol"/>
    <property type="evidence" value="ECO:0000314"/>
    <property type="project" value="MGI"/>
</dbReference>
<dbReference type="GO" id="GO:0030425">
    <property type="term" value="C:dendrite"/>
    <property type="evidence" value="ECO:0000314"/>
    <property type="project" value="MGI"/>
</dbReference>
<dbReference type="GO" id="GO:0060077">
    <property type="term" value="C:inhibitory synapse"/>
    <property type="evidence" value="ECO:0000314"/>
    <property type="project" value="MGI"/>
</dbReference>
<dbReference type="GO" id="GO:0005654">
    <property type="term" value="C:nucleoplasm"/>
    <property type="evidence" value="ECO:0007669"/>
    <property type="project" value="Ensembl"/>
</dbReference>
<dbReference type="GO" id="GO:0005634">
    <property type="term" value="C:nucleus"/>
    <property type="evidence" value="ECO:0000314"/>
    <property type="project" value="MGI"/>
</dbReference>
<dbReference type="GO" id="GO:0048471">
    <property type="term" value="C:perinuclear region of cytoplasm"/>
    <property type="evidence" value="ECO:0000314"/>
    <property type="project" value="RGD"/>
</dbReference>
<dbReference type="GO" id="GO:0005886">
    <property type="term" value="C:plasma membrane"/>
    <property type="evidence" value="ECO:0000314"/>
    <property type="project" value="MGI"/>
</dbReference>
<dbReference type="GO" id="GO:0050811">
    <property type="term" value="F:GABA receptor binding"/>
    <property type="evidence" value="ECO:0000353"/>
    <property type="project" value="RGD"/>
</dbReference>
<dbReference type="GO" id="GO:0000994">
    <property type="term" value="F:RNA polymerase III core binding"/>
    <property type="evidence" value="ECO:0000318"/>
    <property type="project" value="GO_Central"/>
</dbReference>
<dbReference type="GO" id="GO:0001002">
    <property type="term" value="F:RNA polymerase III type 1 promoter sequence-specific DNA binding"/>
    <property type="evidence" value="ECO:0000266"/>
    <property type="project" value="RGD"/>
</dbReference>
<dbReference type="GO" id="GO:0001003">
    <property type="term" value="F:RNA polymerase III type 2 promoter sequence-specific DNA binding"/>
    <property type="evidence" value="ECO:0000266"/>
    <property type="project" value="RGD"/>
</dbReference>
<dbReference type="GO" id="GO:0001006">
    <property type="term" value="F:RNA polymerase III type 3 promoter sequence-specific DNA binding"/>
    <property type="evidence" value="ECO:0000266"/>
    <property type="project" value="RGD"/>
</dbReference>
<dbReference type="GO" id="GO:0016479">
    <property type="term" value="P:negative regulation of transcription by RNA polymerase I"/>
    <property type="evidence" value="ECO:0000266"/>
    <property type="project" value="RGD"/>
</dbReference>
<dbReference type="GO" id="GO:0016480">
    <property type="term" value="P:negative regulation of transcription by RNA polymerase III"/>
    <property type="evidence" value="ECO:0000250"/>
    <property type="project" value="UniProtKB"/>
</dbReference>
<dbReference type="FunFam" id="3.40.1000.50:FF:000001">
    <property type="entry name" value="Repressor of RNA polymerase III transcription MAF1"/>
    <property type="match status" value="1"/>
</dbReference>
<dbReference type="FunFam" id="3.40.1000.50:FF:000002">
    <property type="entry name" value="Repressor of RNA polymerase III transcription MAF1"/>
    <property type="match status" value="1"/>
</dbReference>
<dbReference type="Gene3D" id="3.40.1000.50">
    <property type="entry name" value="Repressor of RNA polymerase III transcription Maf1"/>
    <property type="match status" value="1"/>
</dbReference>
<dbReference type="InterPro" id="IPR015257">
    <property type="entry name" value="Maf1"/>
</dbReference>
<dbReference type="InterPro" id="IPR038564">
    <property type="entry name" value="Maf1_sf"/>
</dbReference>
<dbReference type="PANTHER" id="PTHR22504">
    <property type="entry name" value="REPRESSOR OF RNA POLYMERASE III TRANSCRIPTION MAF1"/>
    <property type="match status" value="1"/>
</dbReference>
<dbReference type="PANTHER" id="PTHR22504:SF0">
    <property type="entry name" value="REPRESSOR OF RNA POLYMERASE III TRANSCRIPTION MAF1 HOMOLOG"/>
    <property type="match status" value="1"/>
</dbReference>
<dbReference type="Pfam" id="PF09174">
    <property type="entry name" value="Maf1"/>
    <property type="match status" value="1"/>
</dbReference>
<dbReference type="PIRSF" id="PIRSF037240">
    <property type="entry name" value="RNA_polIII_Trep_MAF1"/>
    <property type="match status" value="1"/>
</dbReference>
<accession>Q5XIH0</accession>
<comment type="function">
    <text evidence="2 3">Plays a role in the repression of RNA polymerase III-mediated transcription in response to changing nutritional, environmental and cellular stress conditions to balance the production of highly abundant tRNAs, 5S rRNA, and other small non-coding RNAs with cell growth and maintenance (By similarity). Also plays a key role in cell fate determination by promoting mesorderm induction and adipocyte differentiation (By similarity). Mechanistically, associates with the RNA polymerase III clamp and thereby impairs its recruitment to the complex made of the promoter DNA, TBP and the initiation factor TFIIIB. When nutrients are available and mTOR kinase is active, MAF1 is hyperphosphorylated and RNA polymerase III is engaged in transcription. Stress-induced MAF1 dephosphorylation results in nuclear localization, increased targeting of gene-bound RNA polymerase III and a decrease in the transcriptional readout. Additionally, may also regulate RNA polymerase I and RNA polymerase II-dependent transcription through its ability to regulate expression of the central initiation factor TBP (By similarity).</text>
</comment>
<comment type="subunit">
    <text evidence="3">Interacts with TFIIIB subunits BRF1 and BRF2. Interacts with Pol III subunit POLR3F. Interacts with TFIIIC subunit GTF3C1.</text>
</comment>
<comment type="subcellular location">
    <subcellularLocation>
        <location evidence="3">Nucleus</location>
    </subcellularLocation>
    <subcellularLocation>
        <location evidence="3">Cytoplasm</location>
    </subcellularLocation>
</comment>
<comment type="PTM">
    <text evidence="1">Phosphorylated at Ser-60, Ser-68 and Ser-75; the major sites of phosphorylation. Nuclear accumulation correlates with a concomitant dephosphorylation. Phosphorylation may attenuate its RNA polymerase III-repressive function (By similarity).</text>
</comment>
<comment type="PTM">
    <text evidence="1">Sumoylated with SUMO1 and SUMO2, mainly on Lys-35. Desumoylated by SENP1. SUMOylation promotes the ability of MAF1 to repress transcription and suppress colony formation (By similarity).</text>
</comment>
<comment type="similarity">
    <text evidence="5">Belongs to the MAF1 family.</text>
</comment>
<gene>
    <name type="primary">Maf1</name>
</gene>